<sequence>MDPEAFTASLFKWDTRAMVPHPNRLLEMVPPPQQPPAAAFAVRPRELCGLEELFQAYGIRYYTAAKIAELGFTVNTLLDMKDEELDEMMNSLSQIFRWDLLVGERYGIKAAVRAERRRLDEEDPRRRQLLSGDNNTNTLDALSQEGFSEEPVQQDKEAAGSGGRGTWEAVAAGERKKQSGRKKGQRKVVDLDGDGEHGGAICERQREHPFIVTEPGEVARGKKNGLDYLFHLYEQCRDFLIQVQSIAKERGEKCPTKVTNQVFRYAKKAGASYINKPKMRHYVHCYALHCLDEDASNALRRAFKERGENVGAWRQACYKPLVAIASRQGWDIDSIFNAHPRLAIWYVPTKLRQLCYAERNSATSSSSVSGTGGHLPF</sequence>
<name>FLLH_POPTR</name>
<evidence type="ECO:0000250" key="1"/>
<evidence type="ECO:0000256" key="2">
    <source>
        <dbReference type="SAM" id="MobiDB-lite"/>
    </source>
</evidence>
<evidence type="ECO:0000305" key="3"/>
<feature type="chain" id="PRO_0000129155" description="Floricaula/leafy homolog">
    <location>
        <begin position="1"/>
        <end position="377"/>
    </location>
</feature>
<feature type="DNA-binding region" evidence="1">
    <location>
        <begin position="206"/>
        <end position="210"/>
    </location>
</feature>
<feature type="DNA-binding region" evidence="1">
    <location>
        <begin position="275"/>
        <end position="282"/>
    </location>
</feature>
<feature type="DNA-binding region" evidence="1">
    <location>
        <begin position="346"/>
        <end position="349"/>
    </location>
</feature>
<feature type="region of interest" description="Disordered" evidence="2">
    <location>
        <begin position="116"/>
        <end position="190"/>
    </location>
</feature>
<feature type="compositionally biased region" description="Basic and acidic residues" evidence="2">
    <location>
        <begin position="116"/>
        <end position="126"/>
    </location>
</feature>
<feature type="compositionally biased region" description="Polar residues" evidence="2">
    <location>
        <begin position="131"/>
        <end position="141"/>
    </location>
</feature>
<feature type="site" description="Interaction with DNA" evidence="1">
    <location>
        <position position="253"/>
    </location>
</feature>
<feature type="site" description="Interaction with DNA" evidence="1">
    <location>
        <position position="260"/>
    </location>
</feature>
<feature type="site" description="Interaction with DNA" evidence="1">
    <location>
        <position position="264"/>
    </location>
</feature>
<feature type="site" description="Interaction with DNA" evidence="1">
    <location>
        <position position="311"/>
    </location>
</feature>
<feature type="sequence conflict" description="In Ref. 1; AAB51533." evidence="3" ref="1">
    <original>G</original>
    <variation>D</variation>
    <location>
        <position position="195"/>
    </location>
</feature>
<dbReference type="EMBL" id="U93196">
    <property type="protein sequence ID" value="AAB51533.1"/>
    <property type="molecule type" value="Genomic_DNA"/>
</dbReference>
<dbReference type="EMBL" id="CM009304">
    <property type="protein sequence ID" value="EEF06434.2"/>
    <property type="molecule type" value="Genomic_DNA"/>
</dbReference>
<dbReference type="RefSeq" id="XP_002322307.2">
    <property type="nucleotide sequence ID" value="XM_002322271.2"/>
</dbReference>
<dbReference type="SMR" id="O04064"/>
<dbReference type="FunCoup" id="O04064">
    <property type="interactions" value="8"/>
</dbReference>
<dbReference type="STRING" id="3694.O04064"/>
<dbReference type="GeneID" id="7456652"/>
<dbReference type="KEGG" id="pop:7456652"/>
<dbReference type="eggNOG" id="ENOG502QSDD">
    <property type="taxonomic scope" value="Eukaryota"/>
</dbReference>
<dbReference type="HOGENOM" id="CLU_060646_0_0_1"/>
<dbReference type="InParanoid" id="O04064"/>
<dbReference type="OrthoDB" id="1875842at2759"/>
<dbReference type="Proteomes" id="UP000006729">
    <property type="component" value="Chromosome 15"/>
</dbReference>
<dbReference type="GO" id="GO:0005634">
    <property type="term" value="C:nucleus"/>
    <property type="evidence" value="ECO:0007669"/>
    <property type="project" value="UniProtKB-SubCell"/>
</dbReference>
<dbReference type="GO" id="GO:0003677">
    <property type="term" value="F:DNA binding"/>
    <property type="evidence" value="ECO:0007669"/>
    <property type="project" value="UniProtKB-KW"/>
</dbReference>
<dbReference type="GO" id="GO:0006355">
    <property type="term" value="P:regulation of DNA-templated transcription"/>
    <property type="evidence" value="ECO:0007669"/>
    <property type="project" value="InterPro"/>
</dbReference>
<dbReference type="Gene3D" id="1.10.4180.10">
    <property type="entry name" value="Protein LEAFY"/>
    <property type="match status" value="1"/>
</dbReference>
<dbReference type="InterPro" id="IPR035209">
    <property type="entry name" value="FLO/LFY_C"/>
</dbReference>
<dbReference type="InterPro" id="IPR002910">
    <property type="entry name" value="FLO_LFY"/>
</dbReference>
<dbReference type="InterPro" id="IPR038276">
    <property type="entry name" value="Floricaula/leafy_C_sf"/>
</dbReference>
<dbReference type="InterPro" id="IPR035079">
    <property type="entry name" value="LFY_SAM"/>
</dbReference>
<dbReference type="PANTHER" id="PTHR36079">
    <property type="entry name" value="PROTEIN LEAFY"/>
    <property type="match status" value="1"/>
</dbReference>
<dbReference type="PANTHER" id="PTHR36079:SF1">
    <property type="entry name" value="PROTEIN LEAFY"/>
    <property type="match status" value="1"/>
</dbReference>
<dbReference type="Pfam" id="PF17538">
    <property type="entry name" value="C_LFY_FLO"/>
    <property type="match status" value="1"/>
</dbReference>
<dbReference type="Pfam" id="PF01698">
    <property type="entry name" value="SAM_LFY"/>
    <property type="match status" value="1"/>
</dbReference>
<organism>
    <name type="scientific">Populus trichocarpa</name>
    <name type="common">Western balsam poplar</name>
    <name type="synonym">Populus balsamifera subsp. trichocarpa</name>
    <dbReference type="NCBI Taxonomy" id="3694"/>
    <lineage>
        <taxon>Eukaryota</taxon>
        <taxon>Viridiplantae</taxon>
        <taxon>Streptophyta</taxon>
        <taxon>Embryophyta</taxon>
        <taxon>Tracheophyta</taxon>
        <taxon>Spermatophyta</taxon>
        <taxon>Magnoliopsida</taxon>
        <taxon>eudicotyledons</taxon>
        <taxon>Gunneridae</taxon>
        <taxon>Pentapetalae</taxon>
        <taxon>rosids</taxon>
        <taxon>fabids</taxon>
        <taxon>Malpighiales</taxon>
        <taxon>Salicaceae</taxon>
        <taxon>Saliceae</taxon>
        <taxon>Populus</taxon>
    </lineage>
</organism>
<keyword id="KW-0010">Activator</keyword>
<keyword id="KW-0217">Developmental protein</keyword>
<keyword id="KW-0238">DNA-binding</keyword>
<keyword id="KW-0539">Nucleus</keyword>
<keyword id="KW-1185">Reference proteome</keyword>
<keyword id="KW-0804">Transcription</keyword>
<keyword id="KW-0805">Transcription regulation</keyword>
<gene>
    <name type="primary">FL</name>
    <name type="ORF">POPTR_0015s11820g</name>
</gene>
<reference key="1">
    <citation type="journal article" date="2000" name="Plant J.">
        <title>Diverse effects of overexpression of LEAFY and PTLF, a poplar (Populus) homolog of LEAFY/FLORICAULA, in transgenic poplar and Arabidopsis.</title>
        <authorList>
            <person name="Rottmann W.H."/>
            <person name="Meilan R."/>
            <person name="Sheppard L.A."/>
            <person name="Brunner A.M."/>
            <person name="Skinner J.S."/>
            <person name="Ma C."/>
            <person name="Cheng S."/>
            <person name="Jouanin L."/>
            <person name="Pilate G."/>
            <person name="Strauss S.H."/>
        </authorList>
    </citation>
    <scope>NUCLEOTIDE SEQUENCE [GENOMIC DNA]</scope>
</reference>
<reference key="2">
    <citation type="journal article" date="2006" name="Science">
        <title>The genome of black cottonwood, Populus trichocarpa (Torr. &amp; Gray).</title>
        <authorList>
            <person name="Tuskan G.A."/>
            <person name="Difazio S."/>
            <person name="Jansson S."/>
            <person name="Bohlmann J."/>
            <person name="Grigoriev I."/>
            <person name="Hellsten U."/>
            <person name="Putnam N."/>
            <person name="Ralph S."/>
            <person name="Rombauts S."/>
            <person name="Salamov A."/>
            <person name="Schein J."/>
            <person name="Sterck L."/>
            <person name="Aerts A."/>
            <person name="Bhalerao R.R."/>
            <person name="Bhalerao R.P."/>
            <person name="Blaudez D."/>
            <person name="Boerjan W."/>
            <person name="Brun A."/>
            <person name="Brunner A."/>
            <person name="Busov V."/>
            <person name="Campbell M."/>
            <person name="Carlson J."/>
            <person name="Chalot M."/>
            <person name="Chapman J."/>
            <person name="Chen G.-L."/>
            <person name="Cooper D."/>
            <person name="Coutinho P.M."/>
            <person name="Couturier J."/>
            <person name="Covert S."/>
            <person name="Cronk Q."/>
            <person name="Cunningham R."/>
            <person name="Davis J."/>
            <person name="Degroeve S."/>
            <person name="Dejardin A."/>
            <person name="dePamphilis C.W."/>
            <person name="Detter J."/>
            <person name="Dirks B."/>
            <person name="Dubchak I."/>
            <person name="Duplessis S."/>
            <person name="Ehlting J."/>
            <person name="Ellis B."/>
            <person name="Gendler K."/>
            <person name="Goodstein D."/>
            <person name="Gribskov M."/>
            <person name="Grimwood J."/>
            <person name="Groover A."/>
            <person name="Gunter L."/>
            <person name="Hamberger B."/>
            <person name="Heinze B."/>
            <person name="Helariutta Y."/>
            <person name="Henrissat B."/>
            <person name="Holligan D."/>
            <person name="Holt R."/>
            <person name="Huang W."/>
            <person name="Islam-Faridi N."/>
            <person name="Jones S."/>
            <person name="Jones-Rhoades M."/>
            <person name="Jorgensen R."/>
            <person name="Joshi C."/>
            <person name="Kangasjaervi J."/>
            <person name="Karlsson J."/>
            <person name="Kelleher C."/>
            <person name="Kirkpatrick R."/>
            <person name="Kirst M."/>
            <person name="Kohler A."/>
            <person name="Kalluri U."/>
            <person name="Larimer F."/>
            <person name="Leebens-Mack J."/>
            <person name="Leple J.-C."/>
            <person name="Locascio P."/>
            <person name="Lou Y."/>
            <person name="Lucas S."/>
            <person name="Martin F."/>
            <person name="Montanini B."/>
            <person name="Napoli C."/>
            <person name="Nelson D.R."/>
            <person name="Nelson C."/>
            <person name="Nieminen K."/>
            <person name="Nilsson O."/>
            <person name="Pereda V."/>
            <person name="Peter G."/>
            <person name="Philippe R."/>
            <person name="Pilate G."/>
            <person name="Poliakov A."/>
            <person name="Razumovskaya J."/>
            <person name="Richardson P."/>
            <person name="Rinaldi C."/>
            <person name="Ritland K."/>
            <person name="Rouze P."/>
            <person name="Ryaboy D."/>
            <person name="Schmutz J."/>
            <person name="Schrader J."/>
            <person name="Segerman B."/>
            <person name="Shin H."/>
            <person name="Siddiqui A."/>
            <person name="Sterky F."/>
            <person name="Terry A."/>
            <person name="Tsai C.-J."/>
            <person name="Uberbacher E."/>
            <person name="Unneberg P."/>
            <person name="Vahala J."/>
            <person name="Wall K."/>
            <person name="Wessler S."/>
            <person name="Yang G."/>
            <person name="Yin T."/>
            <person name="Douglas C."/>
            <person name="Marra M."/>
            <person name="Sandberg G."/>
            <person name="Van de Peer Y."/>
            <person name="Rokhsar D.S."/>
        </authorList>
    </citation>
    <scope>NUCLEOTIDE SEQUENCE [LARGE SCALE GENOMIC DNA]</scope>
    <source>
        <strain>cv. Nisqually</strain>
    </source>
</reference>
<accession>O04064</accession>
<accession>B9IFL8</accession>
<proteinExistence type="evidence at transcript level"/>
<comment type="function">
    <text evidence="1">Probable transcription factor.</text>
</comment>
<comment type="subcellular location">
    <subcellularLocation>
        <location evidence="3">Nucleus</location>
    </subcellularLocation>
</comment>
<comment type="tissue specificity">
    <text>In developing inflorescences, leaf primordia and very young leaves.</text>
</comment>
<comment type="similarity">
    <text evidence="3">Belongs to the FLO/LFY family.</text>
</comment>
<protein>
    <recommendedName>
        <fullName>Floricaula/leafy homolog</fullName>
    </recommendedName>
    <alternativeName>
        <fullName>PTLF</fullName>
    </alternativeName>
</protein>